<feature type="chain" id="PRO_0000289998" description="26S proteasome non-ATPase regulatory subunit 2">
    <location>
        <begin position="1"/>
        <end position="908"/>
    </location>
</feature>
<feature type="repeat" description="PC 1">
    <location>
        <begin position="409"/>
        <end position="442"/>
    </location>
</feature>
<feature type="repeat" description="PC 2">
    <location>
        <begin position="443"/>
        <end position="479"/>
    </location>
</feature>
<feature type="repeat" description="PC 3">
    <location>
        <begin position="480"/>
        <end position="514"/>
    </location>
</feature>
<feature type="repeat" description="PC 4">
    <location>
        <begin position="517"/>
        <end position="551"/>
    </location>
</feature>
<feature type="repeat" description="PC 5">
    <location>
        <begin position="560"/>
        <end position="589"/>
    </location>
</feature>
<feature type="repeat" description="PC 6">
    <location>
        <begin position="692"/>
        <end position="723"/>
    </location>
</feature>
<feature type="repeat" description="PC 7">
    <location>
        <begin position="742"/>
        <end position="757"/>
    </location>
</feature>
<feature type="region of interest" description="Disordered" evidence="3">
    <location>
        <begin position="1"/>
        <end position="52"/>
    </location>
</feature>
<feature type="region of interest" description="Disordered" evidence="3">
    <location>
        <begin position="623"/>
        <end position="645"/>
    </location>
</feature>
<feature type="region of interest" description="Required for interaction with UBLCP1" evidence="1">
    <location>
        <begin position="708"/>
        <end position="903"/>
    </location>
</feature>
<feature type="compositionally biased region" description="Low complexity" evidence="3">
    <location>
        <begin position="10"/>
        <end position="20"/>
    </location>
</feature>
<feature type="compositionally biased region" description="Basic and acidic residues" evidence="3">
    <location>
        <begin position="24"/>
        <end position="52"/>
    </location>
</feature>
<feature type="compositionally biased region" description="Basic and acidic residues" evidence="3">
    <location>
        <begin position="623"/>
        <end position="643"/>
    </location>
</feature>
<feature type="modified residue" description="N-acetylmethionine" evidence="2">
    <location>
        <position position="1"/>
    </location>
</feature>
<feature type="modified residue" description="Phosphoserine" evidence="1">
    <location>
        <position position="16"/>
    </location>
</feature>
<feature type="modified residue" description="Phosphothreonine" evidence="1">
    <location>
        <position position="24"/>
    </location>
</feature>
<feature type="modified residue" description="Phosphoserine" evidence="1">
    <location>
        <position position="29"/>
    </location>
</feature>
<feature type="modified residue" description="Phosphoserine" evidence="1">
    <location>
        <position position="147"/>
    </location>
</feature>
<feature type="modified residue" description="Phosphotyrosine" evidence="1">
    <location>
        <position position="194"/>
    </location>
</feature>
<feature type="modified residue" description="Phosphoserine" evidence="1">
    <location>
        <position position="361"/>
    </location>
</feature>
<feature type="modified residue" description="Phosphoserine" evidence="1">
    <location>
        <position position="363"/>
    </location>
</feature>
<feature type="modified residue" description="N6-acetyllysine" evidence="2">
    <location>
        <position position="551"/>
    </location>
</feature>
<reference key="1">
    <citation type="submission" date="2004-11" db="EMBL/GenBank/DDBJ databases">
        <authorList>
            <consortium name="The German cDNA consortium"/>
        </authorList>
    </citation>
    <scope>NUCLEOTIDE SEQUENCE [LARGE SCALE MRNA]</scope>
    <source>
        <tissue>Brain cortex</tissue>
    </source>
</reference>
<dbReference type="EMBL" id="CR859401">
    <property type="protein sequence ID" value="CAH91574.1"/>
    <property type="molecule type" value="mRNA"/>
</dbReference>
<dbReference type="EMBL" id="CR859332">
    <property type="protein sequence ID" value="CAH91509.1"/>
    <property type="molecule type" value="mRNA"/>
</dbReference>
<dbReference type="RefSeq" id="NP_001125887.1">
    <property type="nucleotide sequence ID" value="NM_001132415.2"/>
</dbReference>
<dbReference type="SMR" id="Q5R9I6"/>
<dbReference type="FunCoup" id="Q5R9I6">
    <property type="interactions" value="2953"/>
</dbReference>
<dbReference type="STRING" id="9601.ENSPPYP00000016052"/>
<dbReference type="Ensembl" id="ENSPPYT00000016696.2">
    <property type="protein sequence ID" value="ENSPPYP00000016052.2"/>
    <property type="gene ID" value="ENSPPYG00000014354.2"/>
</dbReference>
<dbReference type="GeneID" id="100172819"/>
<dbReference type="KEGG" id="pon:100172819"/>
<dbReference type="CTD" id="5708"/>
<dbReference type="eggNOG" id="KOG2005">
    <property type="taxonomic scope" value="Eukaryota"/>
</dbReference>
<dbReference type="GeneTree" id="ENSGT00940000153386"/>
<dbReference type="HOGENOM" id="CLU_008705_1_0_1"/>
<dbReference type="InParanoid" id="Q5R9I6"/>
<dbReference type="OMA" id="GTCNGDI"/>
<dbReference type="OrthoDB" id="10252509at2759"/>
<dbReference type="Proteomes" id="UP000001595">
    <property type="component" value="Chromosome 3"/>
</dbReference>
<dbReference type="GO" id="GO:0005634">
    <property type="term" value="C:nucleus"/>
    <property type="evidence" value="ECO:0007669"/>
    <property type="project" value="TreeGrafter"/>
</dbReference>
<dbReference type="GO" id="GO:0022624">
    <property type="term" value="C:proteasome accessory complex"/>
    <property type="evidence" value="ECO:0000250"/>
    <property type="project" value="UniProtKB"/>
</dbReference>
<dbReference type="GO" id="GO:0008540">
    <property type="term" value="C:proteasome regulatory particle, base subcomplex"/>
    <property type="evidence" value="ECO:0007669"/>
    <property type="project" value="TreeGrafter"/>
</dbReference>
<dbReference type="GO" id="GO:0034515">
    <property type="term" value="C:proteasome storage granule"/>
    <property type="evidence" value="ECO:0007669"/>
    <property type="project" value="TreeGrafter"/>
</dbReference>
<dbReference type="GO" id="GO:0030234">
    <property type="term" value="F:enzyme regulator activity"/>
    <property type="evidence" value="ECO:0007669"/>
    <property type="project" value="InterPro"/>
</dbReference>
<dbReference type="GO" id="GO:0043161">
    <property type="term" value="P:proteasome-mediated ubiquitin-dependent protein catabolic process"/>
    <property type="evidence" value="ECO:0007669"/>
    <property type="project" value="TreeGrafter"/>
</dbReference>
<dbReference type="GO" id="GO:0042176">
    <property type="term" value="P:regulation of protein catabolic process"/>
    <property type="evidence" value="ECO:0007669"/>
    <property type="project" value="InterPro"/>
</dbReference>
<dbReference type="FunFam" id="1.25.10.10:FF:000026">
    <property type="entry name" value="26S proteasome non-ATPase regulatory subunit 2"/>
    <property type="match status" value="1"/>
</dbReference>
<dbReference type="Gene3D" id="1.25.10.10">
    <property type="entry name" value="Leucine-rich Repeat Variant"/>
    <property type="match status" value="1"/>
</dbReference>
<dbReference type="InterPro" id="IPR016643">
    <property type="entry name" value="26S_Psome_Rpn1"/>
</dbReference>
<dbReference type="InterPro" id="IPR011989">
    <property type="entry name" value="ARM-like"/>
</dbReference>
<dbReference type="InterPro" id="IPR016024">
    <property type="entry name" value="ARM-type_fold"/>
</dbReference>
<dbReference type="InterPro" id="IPR002015">
    <property type="entry name" value="Proteasome/cyclosome_rpt"/>
</dbReference>
<dbReference type="InterPro" id="IPR041433">
    <property type="entry name" value="RPN1_C"/>
</dbReference>
<dbReference type="InterPro" id="IPR040892">
    <property type="entry name" value="RPN1_N"/>
</dbReference>
<dbReference type="PANTHER" id="PTHR10943">
    <property type="entry name" value="26S PROTEASOME NON-ATPASE REGULATORY SUBUNIT"/>
    <property type="match status" value="1"/>
</dbReference>
<dbReference type="PANTHER" id="PTHR10943:SF1">
    <property type="entry name" value="26S PROTEASOME NON-ATPASE REGULATORY SUBUNIT 2"/>
    <property type="match status" value="1"/>
</dbReference>
<dbReference type="Pfam" id="PF01851">
    <property type="entry name" value="PC_rep"/>
    <property type="match status" value="2"/>
</dbReference>
<dbReference type="Pfam" id="PF18051">
    <property type="entry name" value="RPN1_C"/>
    <property type="match status" value="1"/>
</dbReference>
<dbReference type="Pfam" id="PF17781">
    <property type="entry name" value="RPN1_RPN2_N"/>
    <property type="match status" value="1"/>
</dbReference>
<dbReference type="PIRSF" id="PIRSF015965">
    <property type="entry name" value="26S_Psome_Rpn1"/>
    <property type="match status" value="1"/>
</dbReference>
<dbReference type="SUPFAM" id="SSF48371">
    <property type="entry name" value="ARM repeat"/>
    <property type="match status" value="1"/>
</dbReference>
<sequence>MEEGGRDKAPVQPQQSPAAALGGTDEKPSGKERRDAGDKDKEQELSEEDKQLQDELEMLVERLGEKDTSLYRPALEELRRQIRSSTTSMTSVPKPLKFLRPHYGKLKEIYENMAPGENKRFAADIISVLAMTMSGERECLKYRLVGSQEELASWGHEYVRHLAGEVAKEWQELDDAEKVQREPLLTLVKEIIPYNMAHNAEHEACDLLMEIEQVDMLEKDIDENAYAKVCLYLTSCVNYVPEPENSALLRCALGVFRKFSRFPEALRLALMLNDMELVEDIFTSCKDVVVQKQMAFMLGRHGVFLELSEDVEEYEDLTEIMSNVQLNSNFLALARELDIMEPKVPDDIYKTHLENNRFGGSGSQVDSARMNLASSFVNGFVNAAFGQDKLLTDDGNKWLYKNKDHGMLSAAASLGMILLWDVDGGLTQIDKYLYSSEDYIKSGALLACGIVNSGVRNECDPALALLSDYVLHNSNTMRLGSIFGLGLAYAGSNREDVLTLLLPVMGDSKSSMEVAGVTALACGMIAVGSCNGDVTSTILQTIMEKSETELKDTYARWLPLGLGLNHLGKGEAIEAILAALEVVSEPFRSFANTLVDVCAYAGSGNVLKVQQLLHICSEHFDSKEKEEDKDKKEKKDKDKKEAPADMGAHQGVAVLGIALIAMGEEIGAEMALRTFGHLLRYGEPTLRRAVPLALALISVSNPRLNILDTLSKFSHDADPEVSYNSIFAMGMVGSGTNNARLAAMLRQLAQYHAKDPNNLFMVRLAQGLTHLGKGTLTLCPYHSDRQLMSQVAVAGLLTVLVSFLDVRNIILGKSHYVLYGLVAAMQPRMLVTFDEELRPLPVSVRVGQAVDVVGQAGKPKTITGFQTHTTPVLLAHGERAELATEEFLPVTPILEGFVILRKNPNYDL</sequence>
<comment type="function">
    <text evidence="1">Component of the 26S proteasome, a multiprotein complex involved in the ATP-dependent degradation of ubiquitinated proteins. This complex plays a key role in the maintenance of protein homeostasis by removing misfolded or damaged proteins, which could impair cellular functions, and by removing proteins whose functions are no longer required. Therefore, the proteasome participates in numerous cellular processes, including cell cycle progression, apoptosis, or DNA damage repair.</text>
</comment>
<comment type="function">
    <text evidence="1">Binds to the intracellular domain of tumor necrosis factor type 1 receptor. The binding domain of TRAP1 and TRAP2 resides outside the death domain of TNFR1.</text>
</comment>
<comment type="subunit">
    <text evidence="1 2">Component of the 19S proteasome regulatory particle complex. The 26S proteasome consists of a 20S core particle (CP) and two 19S regulatory subunits (RP). The regulatory particle is made of a lid composed of 9 subunits, a base containing 6 ATPases and few additional components including PSMD2 (By similarity). Interacts with RPGRIP1L (By similarity). Interacts with CRY1 in a KDM8-dependent manner (By similarity). Interacts (via C-terminus) with phosphatase UBLCP1 (via ubiquitin-like domain); the interaction recruits UBLCP1 to the 19S regulatory particle where it dephosphorylates 19S subunit PSMC2/RPT1 which impairs PSMC2 ATPase activity and disrupts 26S proteasome assembly (By similarity).</text>
</comment>
<comment type="similarity">
    <text evidence="4">Belongs to the proteasome subunit S2 family.</text>
</comment>
<keyword id="KW-0007">Acetylation</keyword>
<keyword id="KW-0597">Phosphoprotein</keyword>
<keyword id="KW-0647">Proteasome</keyword>
<keyword id="KW-1185">Reference proteome</keyword>
<keyword id="KW-0677">Repeat</keyword>
<evidence type="ECO:0000250" key="1">
    <source>
        <dbReference type="UniProtKB" id="Q13200"/>
    </source>
</evidence>
<evidence type="ECO:0000250" key="2">
    <source>
        <dbReference type="UniProtKB" id="Q8VDM4"/>
    </source>
</evidence>
<evidence type="ECO:0000256" key="3">
    <source>
        <dbReference type="SAM" id="MobiDB-lite"/>
    </source>
</evidence>
<evidence type="ECO:0000305" key="4"/>
<name>PSMD2_PONAB</name>
<gene>
    <name type="primary">PSMD2</name>
</gene>
<protein>
    <recommendedName>
        <fullName>26S proteasome non-ATPase regulatory subunit 2</fullName>
    </recommendedName>
</protein>
<accession>Q5R9I6</accession>
<proteinExistence type="evidence at transcript level"/>
<organism>
    <name type="scientific">Pongo abelii</name>
    <name type="common">Sumatran orangutan</name>
    <name type="synonym">Pongo pygmaeus abelii</name>
    <dbReference type="NCBI Taxonomy" id="9601"/>
    <lineage>
        <taxon>Eukaryota</taxon>
        <taxon>Metazoa</taxon>
        <taxon>Chordata</taxon>
        <taxon>Craniata</taxon>
        <taxon>Vertebrata</taxon>
        <taxon>Euteleostomi</taxon>
        <taxon>Mammalia</taxon>
        <taxon>Eutheria</taxon>
        <taxon>Euarchontoglires</taxon>
        <taxon>Primates</taxon>
        <taxon>Haplorrhini</taxon>
        <taxon>Catarrhini</taxon>
        <taxon>Hominidae</taxon>
        <taxon>Pongo</taxon>
    </lineage>
</organism>